<keyword id="KW-0131">Cell cycle</keyword>
<keyword id="KW-0132">Cell division</keyword>
<keyword id="KW-0159">Chromosome partition</keyword>
<keyword id="KW-0963">Cytoplasm</keyword>
<keyword id="KW-0229">DNA integration</keyword>
<keyword id="KW-0233">DNA recombination</keyword>
<keyword id="KW-0238">DNA-binding</keyword>
<gene>
    <name evidence="1" type="primary">xerC</name>
    <name type="ordered locus">LBUL_1188</name>
</gene>
<name>XERC_LACDB</name>
<dbReference type="EMBL" id="CP000412">
    <property type="protein sequence ID" value="ABJ58719.1"/>
    <property type="molecule type" value="Genomic_DNA"/>
</dbReference>
<dbReference type="RefSeq" id="WP_003618694.1">
    <property type="nucleotide sequence ID" value="NC_008529.1"/>
</dbReference>
<dbReference type="SMR" id="Q04A03"/>
<dbReference type="KEGG" id="lbu:LBUL_1188"/>
<dbReference type="HOGENOM" id="CLU_027562_9_0_9"/>
<dbReference type="BioCyc" id="LDEL321956:LBUL_RS05545-MONOMER"/>
<dbReference type="GO" id="GO:0005737">
    <property type="term" value="C:cytoplasm"/>
    <property type="evidence" value="ECO:0007669"/>
    <property type="project" value="UniProtKB-SubCell"/>
</dbReference>
<dbReference type="GO" id="GO:0003677">
    <property type="term" value="F:DNA binding"/>
    <property type="evidence" value="ECO:0007669"/>
    <property type="project" value="UniProtKB-KW"/>
</dbReference>
<dbReference type="GO" id="GO:0009037">
    <property type="term" value="F:tyrosine-based site-specific recombinase activity"/>
    <property type="evidence" value="ECO:0007669"/>
    <property type="project" value="UniProtKB-UniRule"/>
</dbReference>
<dbReference type="GO" id="GO:0051301">
    <property type="term" value="P:cell division"/>
    <property type="evidence" value="ECO:0007669"/>
    <property type="project" value="UniProtKB-KW"/>
</dbReference>
<dbReference type="GO" id="GO:0007059">
    <property type="term" value="P:chromosome segregation"/>
    <property type="evidence" value="ECO:0007669"/>
    <property type="project" value="UniProtKB-UniRule"/>
</dbReference>
<dbReference type="GO" id="GO:0006313">
    <property type="term" value="P:DNA transposition"/>
    <property type="evidence" value="ECO:0007669"/>
    <property type="project" value="UniProtKB-UniRule"/>
</dbReference>
<dbReference type="CDD" id="cd00798">
    <property type="entry name" value="INT_XerDC_C"/>
    <property type="match status" value="1"/>
</dbReference>
<dbReference type="Gene3D" id="1.10.150.130">
    <property type="match status" value="1"/>
</dbReference>
<dbReference type="Gene3D" id="1.10.443.10">
    <property type="entry name" value="Intergrase catalytic core"/>
    <property type="match status" value="1"/>
</dbReference>
<dbReference type="HAMAP" id="MF_01808">
    <property type="entry name" value="Recomb_XerC_XerD"/>
    <property type="match status" value="1"/>
</dbReference>
<dbReference type="InterPro" id="IPR044068">
    <property type="entry name" value="CB"/>
</dbReference>
<dbReference type="InterPro" id="IPR011010">
    <property type="entry name" value="DNA_brk_join_enz"/>
</dbReference>
<dbReference type="InterPro" id="IPR013762">
    <property type="entry name" value="Integrase-like_cat_sf"/>
</dbReference>
<dbReference type="InterPro" id="IPR002104">
    <property type="entry name" value="Integrase_catalytic"/>
</dbReference>
<dbReference type="InterPro" id="IPR010998">
    <property type="entry name" value="Integrase_recombinase_N"/>
</dbReference>
<dbReference type="InterPro" id="IPR004107">
    <property type="entry name" value="Integrase_SAM-like_N"/>
</dbReference>
<dbReference type="InterPro" id="IPR011931">
    <property type="entry name" value="Recomb_XerC"/>
</dbReference>
<dbReference type="InterPro" id="IPR023009">
    <property type="entry name" value="Tyrosine_recombinase_XerC/XerD"/>
</dbReference>
<dbReference type="InterPro" id="IPR050090">
    <property type="entry name" value="Tyrosine_recombinase_XerCD"/>
</dbReference>
<dbReference type="NCBIfam" id="NF001399">
    <property type="entry name" value="PRK00283.1"/>
    <property type="match status" value="1"/>
</dbReference>
<dbReference type="NCBIfam" id="NF040815">
    <property type="entry name" value="recomb_XerA_Arch"/>
    <property type="match status" value="1"/>
</dbReference>
<dbReference type="NCBIfam" id="TIGR02224">
    <property type="entry name" value="recomb_XerC"/>
    <property type="match status" value="1"/>
</dbReference>
<dbReference type="PANTHER" id="PTHR30349">
    <property type="entry name" value="PHAGE INTEGRASE-RELATED"/>
    <property type="match status" value="1"/>
</dbReference>
<dbReference type="PANTHER" id="PTHR30349:SF77">
    <property type="entry name" value="TYROSINE RECOMBINASE XERC"/>
    <property type="match status" value="1"/>
</dbReference>
<dbReference type="Pfam" id="PF02899">
    <property type="entry name" value="Phage_int_SAM_1"/>
    <property type="match status" value="1"/>
</dbReference>
<dbReference type="Pfam" id="PF00589">
    <property type="entry name" value="Phage_integrase"/>
    <property type="match status" value="1"/>
</dbReference>
<dbReference type="SUPFAM" id="SSF56349">
    <property type="entry name" value="DNA breaking-rejoining enzymes"/>
    <property type="match status" value="1"/>
</dbReference>
<dbReference type="PROSITE" id="PS51900">
    <property type="entry name" value="CB"/>
    <property type="match status" value="1"/>
</dbReference>
<dbReference type="PROSITE" id="PS51898">
    <property type="entry name" value="TYR_RECOMBINASE"/>
    <property type="match status" value="1"/>
</dbReference>
<organism>
    <name type="scientific">Lactobacillus delbrueckii subsp. bulgaricus (strain ATCC BAA-365 / Lb-18)</name>
    <dbReference type="NCBI Taxonomy" id="321956"/>
    <lineage>
        <taxon>Bacteria</taxon>
        <taxon>Bacillati</taxon>
        <taxon>Bacillota</taxon>
        <taxon>Bacilli</taxon>
        <taxon>Lactobacillales</taxon>
        <taxon>Lactobacillaceae</taxon>
        <taxon>Lactobacillus</taxon>
    </lineage>
</organism>
<evidence type="ECO:0000255" key="1">
    <source>
        <dbReference type="HAMAP-Rule" id="MF_01808"/>
    </source>
</evidence>
<evidence type="ECO:0000255" key="2">
    <source>
        <dbReference type="PROSITE-ProRule" id="PRU01246"/>
    </source>
</evidence>
<evidence type="ECO:0000255" key="3">
    <source>
        <dbReference type="PROSITE-ProRule" id="PRU01248"/>
    </source>
</evidence>
<proteinExistence type="inferred from homology"/>
<accession>Q04A03</accession>
<protein>
    <recommendedName>
        <fullName evidence="1">Tyrosine recombinase XerC</fullName>
    </recommendedName>
</protein>
<reference key="1">
    <citation type="journal article" date="2006" name="Proc. Natl. Acad. Sci. U.S.A.">
        <title>Comparative genomics of the lactic acid bacteria.</title>
        <authorList>
            <person name="Makarova K.S."/>
            <person name="Slesarev A."/>
            <person name="Wolf Y.I."/>
            <person name="Sorokin A."/>
            <person name="Mirkin B."/>
            <person name="Koonin E.V."/>
            <person name="Pavlov A."/>
            <person name="Pavlova N."/>
            <person name="Karamychev V."/>
            <person name="Polouchine N."/>
            <person name="Shakhova V."/>
            <person name="Grigoriev I."/>
            <person name="Lou Y."/>
            <person name="Rohksar D."/>
            <person name="Lucas S."/>
            <person name="Huang K."/>
            <person name="Goodstein D.M."/>
            <person name="Hawkins T."/>
            <person name="Plengvidhya V."/>
            <person name="Welker D."/>
            <person name="Hughes J."/>
            <person name="Goh Y."/>
            <person name="Benson A."/>
            <person name="Baldwin K."/>
            <person name="Lee J.-H."/>
            <person name="Diaz-Muniz I."/>
            <person name="Dosti B."/>
            <person name="Smeianov V."/>
            <person name="Wechter W."/>
            <person name="Barabote R."/>
            <person name="Lorca G."/>
            <person name="Altermann E."/>
            <person name="Barrangou R."/>
            <person name="Ganesan B."/>
            <person name="Xie Y."/>
            <person name="Rawsthorne H."/>
            <person name="Tamir D."/>
            <person name="Parker C."/>
            <person name="Breidt F."/>
            <person name="Broadbent J.R."/>
            <person name="Hutkins R."/>
            <person name="O'Sullivan D."/>
            <person name="Steele J."/>
            <person name="Unlu G."/>
            <person name="Saier M.H. Jr."/>
            <person name="Klaenhammer T."/>
            <person name="Richardson P."/>
            <person name="Kozyavkin S."/>
            <person name="Weimer B.C."/>
            <person name="Mills D.A."/>
        </authorList>
    </citation>
    <scope>NUCLEOTIDE SEQUENCE [LARGE SCALE GENOMIC DNA]</scope>
    <source>
        <strain>ATCC BAA-365 / Lb-18</strain>
    </source>
</reference>
<feature type="chain" id="PRO_1000070009" description="Tyrosine recombinase XerC">
    <location>
        <begin position="1"/>
        <end position="295"/>
    </location>
</feature>
<feature type="domain" description="Core-binding (CB)" evidence="3">
    <location>
        <begin position="1"/>
        <end position="84"/>
    </location>
</feature>
<feature type="domain" description="Tyr recombinase" evidence="2">
    <location>
        <begin position="105"/>
        <end position="289"/>
    </location>
</feature>
<feature type="active site" evidence="1">
    <location>
        <position position="145"/>
    </location>
</feature>
<feature type="active site" evidence="1">
    <location>
        <position position="169"/>
    </location>
</feature>
<feature type="active site" evidence="1">
    <location>
        <position position="241"/>
    </location>
</feature>
<feature type="active site" evidence="1">
    <location>
        <position position="244"/>
    </location>
</feature>
<feature type="active site" evidence="1">
    <location>
        <position position="267"/>
    </location>
</feature>
<feature type="active site" description="O-(3'-phospho-DNA)-tyrosine intermediate" evidence="1">
    <location>
        <position position="276"/>
    </location>
</feature>
<sequence length="295" mass="33681">MTLEEQFLSYLKNERSYSPKTVLAYQKDLAAAKKFWQENGGFPGWDQISRRDLEIYLLATGQKLASSTLSRKLSSLKSFYRFLTRRGLVKADPTVAIQLRRGKKKLPEFFYQDEVGQVIRSLNDGKPLTVRNRAIVALFYATGMRLSELTDLKIKQLDLENGMILVHGKGNKDRYVFFDQESKKYLEEYLQAARPSLLKNEPDTGAVFLNKLGRPISSRGIAKAVQQIFQKAGLTAGAHPHELRHSFATAMLNNGADLRSVQELLGHEDLSTTQIYTHVSMQHLTVEYRQHFPRK</sequence>
<comment type="function">
    <text evidence="1">Site-specific tyrosine recombinase, which acts by catalyzing the cutting and rejoining of the recombining DNA molecules. The XerC-XerD complex is essential to convert dimers of the bacterial chromosome into monomers to permit their segregation at cell division. It also contributes to the segregational stability of plasmids.</text>
</comment>
<comment type="subunit">
    <text evidence="1">Forms a cyclic heterotetrameric complex composed of two molecules of XerC and two molecules of XerD.</text>
</comment>
<comment type="subcellular location">
    <subcellularLocation>
        <location evidence="1">Cytoplasm</location>
    </subcellularLocation>
</comment>
<comment type="similarity">
    <text evidence="1">Belongs to the 'phage' integrase family. XerC subfamily.</text>
</comment>